<sequence length="339" mass="34179">MNDFKSIIGKLATGVTLSREESAGAFDAMMSGEATPSQMGALLMALRVRGETVEEITGAVAAMRSKMLRVTAPADAVDVVGTGGDGSGSVNVSTCASFIVAGAGVPVAKHGNRALSSKSGAADVLAALGVKIDITPAEVGRCIKEAGIGFMFAPTHHPAMKNVGPTRVELATRTIFNLLGPLSNPAGVTRQMVGVFSRQWVQPLAQVLKNLGSESAWVVHGSDGLDEITISGPTFVAALADGKITTFEITPEDAGLPRAGADVLKGGDAEANAVALQGVLDGKPSAYRDVALLNAAAALIVGGRANTLKDGVAQGAQALDSGAAAAKLKQLIAVSNAAA</sequence>
<evidence type="ECO:0000255" key="1">
    <source>
        <dbReference type="HAMAP-Rule" id="MF_00211"/>
    </source>
</evidence>
<keyword id="KW-0028">Amino-acid biosynthesis</keyword>
<keyword id="KW-0057">Aromatic amino acid biosynthesis</keyword>
<keyword id="KW-0328">Glycosyltransferase</keyword>
<keyword id="KW-0460">Magnesium</keyword>
<keyword id="KW-0479">Metal-binding</keyword>
<keyword id="KW-0808">Transferase</keyword>
<keyword id="KW-0822">Tryptophan biosynthesis</keyword>
<protein>
    <recommendedName>
        <fullName evidence="1">Anthranilate phosphoribosyltransferase</fullName>
        <ecNumber evidence="1">2.4.2.18</ecNumber>
    </recommendedName>
</protein>
<name>TRPD_RHOPB</name>
<dbReference type="EC" id="2.4.2.18" evidence="1"/>
<dbReference type="EMBL" id="CP000301">
    <property type="protein sequence ID" value="ABD88018.1"/>
    <property type="molecule type" value="Genomic_DNA"/>
</dbReference>
<dbReference type="SMR" id="Q215B8"/>
<dbReference type="STRING" id="316056.RPC_2467"/>
<dbReference type="KEGG" id="rpc:RPC_2467"/>
<dbReference type="eggNOG" id="COG0547">
    <property type="taxonomic scope" value="Bacteria"/>
</dbReference>
<dbReference type="HOGENOM" id="CLU_034315_2_1_5"/>
<dbReference type="OrthoDB" id="9806430at2"/>
<dbReference type="UniPathway" id="UPA00035">
    <property type="reaction ID" value="UER00041"/>
</dbReference>
<dbReference type="GO" id="GO:0005829">
    <property type="term" value="C:cytosol"/>
    <property type="evidence" value="ECO:0007669"/>
    <property type="project" value="TreeGrafter"/>
</dbReference>
<dbReference type="GO" id="GO:0004048">
    <property type="term" value="F:anthranilate phosphoribosyltransferase activity"/>
    <property type="evidence" value="ECO:0007669"/>
    <property type="project" value="UniProtKB-UniRule"/>
</dbReference>
<dbReference type="GO" id="GO:0000287">
    <property type="term" value="F:magnesium ion binding"/>
    <property type="evidence" value="ECO:0007669"/>
    <property type="project" value="UniProtKB-UniRule"/>
</dbReference>
<dbReference type="GO" id="GO:0000162">
    <property type="term" value="P:L-tryptophan biosynthetic process"/>
    <property type="evidence" value="ECO:0007669"/>
    <property type="project" value="UniProtKB-UniRule"/>
</dbReference>
<dbReference type="FunFam" id="3.40.1030.10:FF:000002">
    <property type="entry name" value="Anthranilate phosphoribosyltransferase"/>
    <property type="match status" value="1"/>
</dbReference>
<dbReference type="Gene3D" id="3.40.1030.10">
    <property type="entry name" value="Nucleoside phosphorylase/phosphoribosyltransferase catalytic domain"/>
    <property type="match status" value="1"/>
</dbReference>
<dbReference type="Gene3D" id="1.20.970.10">
    <property type="entry name" value="Transferase, Pyrimidine Nucleoside Phosphorylase, Chain C"/>
    <property type="match status" value="1"/>
</dbReference>
<dbReference type="HAMAP" id="MF_00211">
    <property type="entry name" value="TrpD"/>
    <property type="match status" value="1"/>
</dbReference>
<dbReference type="InterPro" id="IPR005940">
    <property type="entry name" value="Anthranilate_Pribosyl_Tfrase"/>
</dbReference>
<dbReference type="InterPro" id="IPR000312">
    <property type="entry name" value="Glycosyl_Trfase_fam3"/>
</dbReference>
<dbReference type="InterPro" id="IPR017459">
    <property type="entry name" value="Glycosyl_Trfase_fam3_N_dom"/>
</dbReference>
<dbReference type="InterPro" id="IPR036320">
    <property type="entry name" value="Glycosyl_Trfase_fam3_N_dom_sf"/>
</dbReference>
<dbReference type="InterPro" id="IPR035902">
    <property type="entry name" value="Nuc_phospho_transferase"/>
</dbReference>
<dbReference type="NCBIfam" id="TIGR01245">
    <property type="entry name" value="trpD"/>
    <property type="match status" value="1"/>
</dbReference>
<dbReference type="PANTHER" id="PTHR43285">
    <property type="entry name" value="ANTHRANILATE PHOSPHORIBOSYLTRANSFERASE"/>
    <property type="match status" value="1"/>
</dbReference>
<dbReference type="PANTHER" id="PTHR43285:SF2">
    <property type="entry name" value="ANTHRANILATE PHOSPHORIBOSYLTRANSFERASE"/>
    <property type="match status" value="1"/>
</dbReference>
<dbReference type="Pfam" id="PF02885">
    <property type="entry name" value="Glycos_trans_3N"/>
    <property type="match status" value="1"/>
</dbReference>
<dbReference type="Pfam" id="PF00591">
    <property type="entry name" value="Glycos_transf_3"/>
    <property type="match status" value="1"/>
</dbReference>
<dbReference type="SUPFAM" id="SSF52418">
    <property type="entry name" value="Nucleoside phosphorylase/phosphoribosyltransferase catalytic domain"/>
    <property type="match status" value="1"/>
</dbReference>
<dbReference type="SUPFAM" id="SSF47648">
    <property type="entry name" value="Nucleoside phosphorylase/phosphoribosyltransferase N-terminal domain"/>
    <property type="match status" value="1"/>
</dbReference>
<reference key="1">
    <citation type="submission" date="2006-03" db="EMBL/GenBank/DDBJ databases">
        <title>Complete sequence of Rhodopseudomonas palustris BisB18.</title>
        <authorList>
            <consortium name="US DOE Joint Genome Institute"/>
            <person name="Copeland A."/>
            <person name="Lucas S."/>
            <person name="Lapidus A."/>
            <person name="Barry K."/>
            <person name="Detter J.C."/>
            <person name="Glavina del Rio T."/>
            <person name="Hammon N."/>
            <person name="Israni S."/>
            <person name="Dalin E."/>
            <person name="Tice H."/>
            <person name="Pitluck S."/>
            <person name="Chain P."/>
            <person name="Malfatti S."/>
            <person name="Shin M."/>
            <person name="Vergez L."/>
            <person name="Schmutz J."/>
            <person name="Larimer F."/>
            <person name="Land M."/>
            <person name="Hauser L."/>
            <person name="Pelletier D.A."/>
            <person name="Kyrpides N."/>
            <person name="Anderson I."/>
            <person name="Oda Y."/>
            <person name="Harwood C.S."/>
            <person name="Richardson P."/>
        </authorList>
    </citation>
    <scope>NUCLEOTIDE SEQUENCE [LARGE SCALE GENOMIC DNA]</scope>
    <source>
        <strain>BisB18</strain>
    </source>
</reference>
<proteinExistence type="inferred from homology"/>
<organism>
    <name type="scientific">Rhodopseudomonas palustris (strain BisB18)</name>
    <dbReference type="NCBI Taxonomy" id="316056"/>
    <lineage>
        <taxon>Bacteria</taxon>
        <taxon>Pseudomonadati</taxon>
        <taxon>Pseudomonadota</taxon>
        <taxon>Alphaproteobacteria</taxon>
        <taxon>Hyphomicrobiales</taxon>
        <taxon>Nitrobacteraceae</taxon>
        <taxon>Rhodopseudomonas</taxon>
    </lineage>
</organism>
<comment type="function">
    <text evidence="1">Catalyzes the transfer of the phosphoribosyl group of 5-phosphorylribose-1-pyrophosphate (PRPP) to anthranilate to yield N-(5'-phosphoribosyl)-anthranilate (PRA).</text>
</comment>
<comment type="catalytic activity">
    <reaction evidence="1">
        <text>N-(5-phospho-beta-D-ribosyl)anthranilate + diphosphate = 5-phospho-alpha-D-ribose 1-diphosphate + anthranilate</text>
        <dbReference type="Rhea" id="RHEA:11768"/>
        <dbReference type="ChEBI" id="CHEBI:16567"/>
        <dbReference type="ChEBI" id="CHEBI:18277"/>
        <dbReference type="ChEBI" id="CHEBI:33019"/>
        <dbReference type="ChEBI" id="CHEBI:58017"/>
        <dbReference type="EC" id="2.4.2.18"/>
    </reaction>
</comment>
<comment type="cofactor">
    <cofactor evidence="1">
        <name>Mg(2+)</name>
        <dbReference type="ChEBI" id="CHEBI:18420"/>
    </cofactor>
    <text evidence="1">Binds 2 magnesium ions per monomer.</text>
</comment>
<comment type="pathway">
    <text evidence="1">Amino-acid biosynthesis; L-tryptophan biosynthesis; L-tryptophan from chorismate: step 2/5.</text>
</comment>
<comment type="subunit">
    <text evidence="1">Homodimer.</text>
</comment>
<comment type="similarity">
    <text evidence="1">Belongs to the anthranilate phosphoribosyltransferase family.</text>
</comment>
<feature type="chain" id="PRO_1000043057" description="Anthranilate phosphoribosyltransferase">
    <location>
        <begin position="1"/>
        <end position="339"/>
    </location>
</feature>
<feature type="binding site" evidence="1">
    <location>
        <position position="81"/>
    </location>
    <ligand>
        <name>5-phospho-alpha-D-ribose 1-diphosphate</name>
        <dbReference type="ChEBI" id="CHEBI:58017"/>
    </ligand>
</feature>
<feature type="binding site" evidence="1">
    <location>
        <position position="81"/>
    </location>
    <ligand>
        <name>anthranilate</name>
        <dbReference type="ChEBI" id="CHEBI:16567"/>
        <label>1</label>
    </ligand>
</feature>
<feature type="binding site" evidence="1">
    <location>
        <begin position="84"/>
        <end position="85"/>
    </location>
    <ligand>
        <name>5-phospho-alpha-D-ribose 1-diphosphate</name>
        <dbReference type="ChEBI" id="CHEBI:58017"/>
    </ligand>
</feature>
<feature type="binding site" evidence="1">
    <location>
        <position position="89"/>
    </location>
    <ligand>
        <name>5-phospho-alpha-D-ribose 1-diphosphate</name>
        <dbReference type="ChEBI" id="CHEBI:58017"/>
    </ligand>
</feature>
<feature type="binding site" evidence="1">
    <location>
        <begin position="91"/>
        <end position="94"/>
    </location>
    <ligand>
        <name>5-phospho-alpha-D-ribose 1-diphosphate</name>
        <dbReference type="ChEBI" id="CHEBI:58017"/>
    </ligand>
</feature>
<feature type="binding site" evidence="1">
    <location>
        <position position="93"/>
    </location>
    <ligand>
        <name>Mg(2+)</name>
        <dbReference type="ChEBI" id="CHEBI:18420"/>
        <label>1</label>
    </ligand>
</feature>
<feature type="binding site" evidence="1">
    <location>
        <begin position="109"/>
        <end position="117"/>
    </location>
    <ligand>
        <name>5-phospho-alpha-D-ribose 1-diphosphate</name>
        <dbReference type="ChEBI" id="CHEBI:58017"/>
    </ligand>
</feature>
<feature type="binding site" evidence="1">
    <location>
        <position position="112"/>
    </location>
    <ligand>
        <name>anthranilate</name>
        <dbReference type="ChEBI" id="CHEBI:16567"/>
        <label>1</label>
    </ligand>
</feature>
<feature type="binding site" evidence="1">
    <location>
        <position position="121"/>
    </location>
    <ligand>
        <name>5-phospho-alpha-D-ribose 1-diphosphate</name>
        <dbReference type="ChEBI" id="CHEBI:58017"/>
    </ligand>
</feature>
<feature type="binding site" evidence="1">
    <location>
        <position position="167"/>
    </location>
    <ligand>
        <name>anthranilate</name>
        <dbReference type="ChEBI" id="CHEBI:16567"/>
        <label>2</label>
    </ligand>
</feature>
<feature type="binding site" evidence="1">
    <location>
        <position position="226"/>
    </location>
    <ligand>
        <name>Mg(2+)</name>
        <dbReference type="ChEBI" id="CHEBI:18420"/>
        <label>2</label>
    </ligand>
</feature>
<feature type="binding site" evidence="1">
    <location>
        <position position="227"/>
    </location>
    <ligand>
        <name>Mg(2+)</name>
        <dbReference type="ChEBI" id="CHEBI:18420"/>
        <label>1</label>
    </ligand>
</feature>
<feature type="binding site" evidence="1">
    <location>
        <position position="227"/>
    </location>
    <ligand>
        <name>Mg(2+)</name>
        <dbReference type="ChEBI" id="CHEBI:18420"/>
        <label>2</label>
    </ligand>
</feature>
<gene>
    <name evidence="1" type="primary">trpD</name>
    <name type="ordered locus">RPC_2467</name>
</gene>
<accession>Q215B8</accession>